<reference key="1">
    <citation type="journal article" date="2011" name="PLoS Genet.">
        <title>Genomic analysis of the necrotrophic fungal pathogens Sclerotinia sclerotiorum and Botrytis cinerea.</title>
        <authorList>
            <person name="Amselem J."/>
            <person name="Cuomo C.A."/>
            <person name="van Kan J.A.L."/>
            <person name="Viaud M."/>
            <person name="Benito E.P."/>
            <person name="Couloux A."/>
            <person name="Coutinho P.M."/>
            <person name="de Vries R.P."/>
            <person name="Dyer P.S."/>
            <person name="Fillinger S."/>
            <person name="Fournier E."/>
            <person name="Gout L."/>
            <person name="Hahn M."/>
            <person name="Kohn L."/>
            <person name="Lapalu N."/>
            <person name="Plummer K.M."/>
            <person name="Pradier J.-M."/>
            <person name="Quevillon E."/>
            <person name="Sharon A."/>
            <person name="Simon A."/>
            <person name="ten Have A."/>
            <person name="Tudzynski B."/>
            <person name="Tudzynski P."/>
            <person name="Wincker P."/>
            <person name="Andrew M."/>
            <person name="Anthouard V."/>
            <person name="Beever R.E."/>
            <person name="Beffa R."/>
            <person name="Benoit I."/>
            <person name="Bouzid O."/>
            <person name="Brault B."/>
            <person name="Chen Z."/>
            <person name="Choquer M."/>
            <person name="Collemare J."/>
            <person name="Cotton P."/>
            <person name="Danchin E.G."/>
            <person name="Da Silva C."/>
            <person name="Gautier A."/>
            <person name="Giraud C."/>
            <person name="Giraud T."/>
            <person name="Gonzalez C."/>
            <person name="Grossetete S."/>
            <person name="Gueldener U."/>
            <person name="Henrissat B."/>
            <person name="Howlett B.J."/>
            <person name="Kodira C."/>
            <person name="Kretschmer M."/>
            <person name="Lappartient A."/>
            <person name="Leroch M."/>
            <person name="Levis C."/>
            <person name="Mauceli E."/>
            <person name="Neuveglise C."/>
            <person name="Oeser B."/>
            <person name="Pearson M."/>
            <person name="Poulain J."/>
            <person name="Poussereau N."/>
            <person name="Quesneville H."/>
            <person name="Rascle C."/>
            <person name="Schumacher J."/>
            <person name="Segurens B."/>
            <person name="Sexton A."/>
            <person name="Silva E."/>
            <person name="Sirven C."/>
            <person name="Soanes D.M."/>
            <person name="Talbot N.J."/>
            <person name="Templeton M."/>
            <person name="Yandava C."/>
            <person name="Yarden O."/>
            <person name="Zeng Q."/>
            <person name="Rollins J.A."/>
            <person name="Lebrun M.-H."/>
            <person name="Dickman M."/>
        </authorList>
    </citation>
    <scope>NUCLEOTIDE SEQUENCE [LARGE SCALE GENOMIC DNA]</scope>
    <source>
        <strain>ATCC 18683 / 1980 / Ss-1</strain>
    </source>
</reference>
<organism>
    <name type="scientific">Sclerotinia sclerotiorum (strain ATCC 18683 / 1980 / Ss-1)</name>
    <name type="common">White mold</name>
    <name type="synonym">Whetzelinia sclerotiorum</name>
    <dbReference type="NCBI Taxonomy" id="665079"/>
    <lineage>
        <taxon>Eukaryota</taxon>
        <taxon>Fungi</taxon>
        <taxon>Dikarya</taxon>
        <taxon>Ascomycota</taxon>
        <taxon>Pezizomycotina</taxon>
        <taxon>Leotiomycetes</taxon>
        <taxon>Helotiales</taxon>
        <taxon>Sclerotiniaceae</taxon>
        <taxon>Sclerotinia</taxon>
    </lineage>
</organism>
<protein>
    <recommendedName>
        <fullName>Respiratory supercomplex factor 1, mitochondrial</fullName>
    </recommendedName>
</protein>
<name>RCF1_SCLS1</name>
<dbReference type="EMBL" id="CH476643">
    <property type="protein sequence ID" value="EDN98250.1"/>
    <property type="molecule type" value="Genomic_DNA"/>
</dbReference>
<dbReference type="RefSeq" id="XP_001586015.1">
    <property type="nucleotide sequence ID" value="XM_001585965.1"/>
</dbReference>
<dbReference type="FunCoup" id="A7F679">
    <property type="interactions" value="67"/>
</dbReference>
<dbReference type="STRING" id="665079.A7F679"/>
<dbReference type="EnsemblFungi" id="EDN98250">
    <property type="protein sequence ID" value="EDN98250"/>
    <property type="gene ID" value="SS1G_13108"/>
</dbReference>
<dbReference type="GeneID" id="5481945"/>
<dbReference type="KEGG" id="ssl:SS1G_13108"/>
<dbReference type="eggNOG" id="KOG4431">
    <property type="taxonomic scope" value="Eukaryota"/>
</dbReference>
<dbReference type="HOGENOM" id="CLU_087356_0_2_1"/>
<dbReference type="InParanoid" id="A7F679"/>
<dbReference type="OMA" id="YNENAFQ"/>
<dbReference type="Proteomes" id="UP000001312">
    <property type="component" value="Unassembled WGS sequence"/>
</dbReference>
<dbReference type="GO" id="GO:0031966">
    <property type="term" value="C:mitochondrial membrane"/>
    <property type="evidence" value="ECO:0007669"/>
    <property type="project" value="UniProtKB-SubCell"/>
</dbReference>
<dbReference type="GO" id="GO:0005739">
    <property type="term" value="C:mitochondrion"/>
    <property type="evidence" value="ECO:0000318"/>
    <property type="project" value="GO_Central"/>
</dbReference>
<dbReference type="GO" id="GO:0097250">
    <property type="term" value="P:mitochondrial respirasome assembly"/>
    <property type="evidence" value="ECO:0000318"/>
    <property type="project" value="GO_Central"/>
</dbReference>
<dbReference type="Gene3D" id="6.10.140.1320">
    <property type="match status" value="1"/>
</dbReference>
<dbReference type="InterPro" id="IPR007667">
    <property type="entry name" value="Hypoxia_induced_domain"/>
</dbReference>
<dbReference type="InterPro" id="IPR050355">
    <property type="entry name" value="RCF1"/>
</dbReference>
<dbReference type="PANTHER" id="PTHR12297:SF3">
    <property type="entry name" value="HIG1 DOMAIN FAMILY MEMBER 1A"/>
    <property type="match status" value="1"/>
</dbReference>
<dbReference type="PANTHER" id="PTHR12297">
    <property type="entry name" value="HYPOXIA-INDUCBILE GENE 1 HIG1 -RELATED"/>
    <property type="match status" value="1"/>
</dbReference>
<dbReference type="Pfam" id="PF04588">
    <property type="entry name" value="HIG_1_N"/>
    <property type="match status" value="1"/>
</dbReference>
<dbReference type="PROSITE" id="PS51503">
    <property type="entry name" value="HIG1"/>
    <property type="match status" value="1"/>
</dbReference>
<proteinExistence type="inferred from homology"/>
<accession>A7F679</accession>
<keyword id="KW-0175">Coiled coil</keyword>
<keyword id="KW-0472">Membrane</keyword>
<keyword id="KW-0496">Mitochondrion</keyword>
<keyword id="KW-1185">Reference proteome</keyword>
<keyword id="KW-0812">Transmembrane</keyword>
<keyword id="KW-1133">Transmembrane helix</keyword>
<evidence type="ECO:0000250" key="1"/>
<evidence type="ECO:0000255" key="2"/>
<evidence type="ECO:0000255" key="3">
    <source>
        <dbReference type="PROSITE-ProRule" id="PRU00836"/>
    </source>
</evidence>
<evidence type="ECO:0000256" key="4">
    <source>
        <dbReference type="SAM" id="MobiDB-lite"/>
    </source>
</evidence>
<evidence type="ECO:0000305" key="5"/>
<comment type="function">
    <text evidence="1">Cytochrome c oxidase subunit which plays a role in assembly of respiratory supercomplexes.</text>
</comment>
<comment type="subunit">
    <text evidence="1">Associates with the respiratory chain complex III/complex IV supercomplex.</text>
</comment>
<comment type="subcellular location">
    <subcellularLocation>
        <location evidence="3">Mitochondrion membrane</location>
        <topology evidence="3">Multi-pass membrane protein</topology>
    </subcellularLocation>
</comment>
<comment type="similarity">
    <text evidence="5">Belongs to the RCF1 family.</text>
</comment>
<sequence length="210" mass="23784">MPSNTPLPSSFDGDTDFYEENRWQKLTRRLKEEPLIPLGKSTHTLTLSPSPPSLHHPSTQKLTHPLTHPPGCILTTLALVGATRSIRAGDHNRTQRMFRARIYAQGFTLLAMVAGSMYWDSDRKKRKEFEGVLAEQKAKEKNEAWIKELEARDEEEKEMRRMRDERRRRAEGKSAASGLVVDAANAGAEEGEKTKNGIVDQMKGMVWGKK</sequence>
<feature type="chain" id="PRO_0000399659" description="Respiratory supercomplex factor 1, mitochondrial">
    <location>
        <begin position="1"/>
        <end position="210"/>
    </location>
</feature>
<feature type="transmembrane region" description="Helical" evidence="3">
    <location>
        <begin position="66"/>
        <end position="82"/>
    </location>
</feature>
<feature type="transmembrane region" description="Helical" evidence="3">
    <location>
        <begin position="102"/>
        <end position="119"/>
    </location>
</feature>
<feature type="domain" description="HIG1" evidence="3">
    <location>
        <begin position="7"/>
        <end position="130"/>
    </location>
</feature>
<feature type="region of interest" description="Disordered" evidence="4">
    <location>
        <begin position="38"/>
        <end position="67"/>
    </location>
</feature>
<feature type="region of interest" description="Disordered" evidence="4">
    <location>
        <begin position="152"/>
        <end position="192"/>
    </location>
</feature>
<feature type="coiled-coil region" evidence="2">
    <location>
        <begin position="138"/>
        <end position="171"/>
    </location>
</feature>
<feature type="compositionally biased region" description="Basic and acidic residues" evidence="4">
    <location>
        <begin position="157"/>
        <end position="172"/>
    </location>
</feature>
<gene>
    <name type="primary">rcf1</name>
    <name type="synonym">aim31</name>
    <name type="ORF">SS1G_13108</name>
</gene>